<feature type="chain" id="PRO_0000360721" description="Uncharacterized protein YqzD">
    <location>
        <begin position="1"/>
        <end position="117"/>
    </location>
</feature>
<feature type="transmembrane region" description="Helical" evidence="1">
    <location>
        <begin position="1"/>
        <end position="21"/>
    </location>
</feature>
<feature type="coiled-coil region" evidence="1">
    <location>
        <begin position="38"/>
        <end position="67"/>
    </location>
</feature>
<reference key="1">
    <citation type="journal article" date="1997" name="Nature">
        <title>The complete genome sequence of the Gram-positive bacterium Bacillus subtilis.</title>
        <authorList>
            <person name="Kunst F."/>
            <person name="Ogasawara N."/>
            <person name="Moszer I."/>
            <person name="Albertini A.M."/>
            <person name="Alloni G."/>
            <person name="Azevedo V."/>
            <person name="Bertero M.G."/>
            <person name="Bessieres P."/>
            <person name="Bolotin A."/>
            <person name="Borchert S."/>
            <person name="Borriss R."/>
            <person name="Boursier L."/>
            <person name="Brans A."/>
            <person name="Braun M."/>
            <person name="Brignell S.C."/>
            <person name="Bron S."/>
            <person name="Brouillet S."/>
            <person name="Bruschi C.V."/>
            <person name="Caldwell B."/>
            <person name="Capuano V."/>
            <person name="Carter N.M."/>
            <person name="Choi S.-K."/>
            <person name="Codani J.-J."/>
            <person name="Connerton I.F."/>
            <person name="Cummings N.J."/>
            <person name="Daniel R.A."/>
            <person name="Denizot F."/>
            <person name="Devine K.M."/>
            <person name="Duesterhoeft A."/>
            <person name="Ehrlich S.D."/>
            <person name="Emmerson P.T."/>
            <person name="Entian K.-D."/>
            <person name="Errington J."/>
            <person name="Fabret C."/>
            <person name="Ferrari E."/>
            <person name="Foulger D."/>
            <person name="Fritz C."/>
            <person name="Fujita M."/>
            <person name="Fujita Y."/>
            <person name="Fuma S."/>
            <person name="Galizzi A."/>
            <person name="Galleron N."/>
            <person name="Ghim S.-Y."/>
            <person name="Glaser P."/>
            <person name="Goffeau A."/>
            <person name="Golightly E.J."/>
            <person name="Grandi G."/>
            <person name="Guiseppi G."/>
            <person name="Guy B.J."/>
            <person name="Haga K."/>
            <person name="Haiech J."/>
            <person name="Harwood C.R."/>
            <person name="Henaut A."/>
            <person name="Hilbert H."/>
            <person name="Holsappel S."/>
            <person name="Hosono S."/>
            <person name="Hullo M.-F."/>
            <person name="Itaya M."/>
            <person name="Jones L.-M."/>
            <person name="Joris B."/>
            <person name="Karamata D."/>
            <person name="Kasahara Y."/>
            <person name="Klaerr-Blanchard M."/>
            <person name="Klein C."/>
            <person name="Kobayashi Y."/>
            <person name="Koetter P."/>
            <person name="Koningstein G."/>
            <person name="Krogh S."/>
            <person name="Kumano M."/>
            <person name="Kurita K."/>
            <person name="Lapidus A."/>
            <person name="Lardinois S."/>
            <person name="Lauber J."/>
            <person name="Lazarevic V."/>
            <person name="Lee S.-M."/>
            <person name="Levine A."/>
            <person name="Liu H."/>
            <person name="Masuda S."/>
            <person name="Mauel C."/>
            <person name="Medigue C."/>
            <person name="Medina N."/>
            <person name="Mellado R.P."/>
            <person name="Mizuno M."/>
            <person name="Moestl D."/>
            <person name="Nakai S."/>
            <person name="Noback M."/>
            <person name="Noone D."/>
            <person name="O'Reilly M."/>
            <person name="Ogawa K."/>
            <person name="Ogiwara A."/>
            <person name="Oudega B."/>
            <person name="Park S.-H."/>
            <person name="Parro V."/>
            <person name="Pohl T.M."/>
            <person name="Portetelle D."/>
            <person name="Porwollik S."/>
            <person name="Prescott A.M."/>
            <person name="Presecan E."/>
            <person name="Pujic P."/>
            <person name="Purnelle B."/>
            <person name="Rapoport G."/>
            <person name="Rey M."/>
            <person name="Reynolds S."/>
            <person name="Rieger M."/>
            <person name="Rivolta C."/>
            <person name="Rocha E."/>
            <person name="Roche B."/>
            <person name="Rose M."/>
            <person name="Sadaie Y."/>
            <person name="Sato T."/>
            <person name="Scanlan E."/>
            <person name="Schleich S."/>
            <person name="Schroeter R."/>
            <person name="Scoffone F."/>
            <person name="Sekiguchi J."/>
            <person name="Sekowska A."/>
            <person name="Seror S.J."/>
            <person name="Serror P."/>
            <person name="Shin B.-S."/>
            <person name="Soldo B."/>
            <person name="Sorokin A."/>
            <person name="Tacconi E."/>
            <person name="Takagi T."/>
            <person name="Takahashi H."/>
            <person name="Takemaru K."/>
            <person name="Takeuchi M."/>
            <person name="Tamakoshi A."/>
            <person name="Tanaka T."/>
            <person name="Terpstra P."/>
            <person name="Tognoni A."/>
            <person name="Tosato V."/>
            <person name="Uchiyama S."/>
            <person name="Vandenbol M."/>
            <person name="Vannier F."/>
            <person name="Vassarotti A."/>
            <person name="Viari A."/>
            <person name="Wambutt R."/>
            <person name="Wedler E."/>
            <person name="Wedler H."/>
            <person name="Weitzenegger T."/>
            <person name="Winters P."/>
            <person name="Wipat A."/>
            <person name="Yamamoto H."/>
            <person name="Yamane K."/>
            <person name="Yasumoto K."/>
            <person name="Yata K."/>
            <person name="Yoshida K."/>
            <person name="Yoshikawa H.-F."/>
            <person name="Zumstein E."/>
            <person name="Yoshikawa H."/>
            <person name="Danchin A."/>
        </authorList>
    </citation>
    <scope>NUCLEOTIDE SEQUENCE [LARGE SCALE GENOMIC DNA]</scope>
    <source>
        <strain>168</strain>
    </source>
</reference>
<name>YQZD_BACSU</name>
<dbReference type="EMBL" id="AL009126">
    <property type="protein sequence ID" value="CAB14423.1"/>
    <property type="molecule type" value="Genomic_DNA"/>
</dbReference>
<dbReference type="PIR" id="C69969">
    <property type="entry name" value="C69969"/>
</dbReference>
<dbReference type="RefSeq" id="NP_390372.1">
    <property type="nucleotide sequence ID" value="NC_000964.3"/>
</dbReference>
<dbReference type="RefSeq" id="WP_003245993.1">
    <property type="nucleotide sequence ID" value="NZ_OZ025638.1"/>
</dbReference>
<dbReference type="SMR" id="O32022"/>
<dbReference type="FunCoup" id="O32022">
    <property type="interactions" value="15"/>
</dbReference>
<dbReference type="STRING" id="224308.BSU24930"/>
<dbReference type="jPOST" id="O32022"/>
<dbReference type="PaxDb" id="224308-BSU24930"/>
<dbReference type="EnsemblBacteria" id="CAB14423">
    <property type="protein sequence ID" value="CAB14423"/>
    <property type="gene ID" value="BSU_24930"/>
</dbReference>
<dbReference type="GeneID" id="938203"/>
<dbReference type="KEGG" id="bsu:BSU24930"/>
<dbReference type="PATRIC" id="fig|224308.179.peg.2712"/>
<dbReference type="eggNOG" id="ENOG5032Z9X">
    <property type="taxonomic scope" value="Bacteria"/>
</dbReference>
<dbReference type="InParanoid" id="O32022"/>
<dbReference type="OrthoDB" id="2454584at2"/>
<dbReference type="BioCyc" id="BSUB:BSU24930-MONOMER"/>
<dbReference type="Proteomes" id="UP000001570">
    <property type="component" value="Chromosome"/>
</dbReference>
<dbReference type="GO" id="GO:0005886">
    <property type="term" value="C:plasma membrane"/>
    <property type="evidence" value="ECO:0007669"/>
    <property type="project" value="UniProtKB-SubCell"/>
</dbReference>
<keyword id="KW-1003">Cell membrane</keyword>
<keyword id="KW-0175">Coiled coil</keyword>
<keyword id="KW-0472">Membrane</keyword>
<keyword id="KW-1185">Reference proteome</keyword>
<keyword id="KW-0812">Transmembrane</keyword>
<keyword id="KW-1133">Transmembrane helix</keyword>
<gene>
    <name type="primary">yqzD</name>
    <name type="ordered locus">BSU24930</name>
</gene>
<organism>
    <name type="scientific">Bacillus subtilis (strain 168)</name>
    <dbReference type="NCBI Taxonomy" id="224308"/>
    <lineage>
        <taxon>Bacteria</taxon>
        <taxon>Bacillati</taxon>
        <taxon>Bacillota</taxon>
        <taxon>Bacilli</taxon>
        <taxon>Bacillales</taxon>
        <taxon>Bacillaceae</taxon>
        <taxon>Bacillus</taxon>
    </lineage>
</organism>
<proteinExistence type="predicted"/>
<sequence length="117" mass="13324">MEIAIIALFIVSIALIAFSYSQRDPMKDVEQELETLQLSAMQEIYKLKKKMTVLEEELLETNLVIRKSKQNDINQKIAKQILSKYNNGMSAEAIAKAEHVSVEDVNTIIKDNEKVLV</sequence>
<protein>
    <recommendedName>
        <fullName>Uncharacterized protein YqzD</fullName>
    </recommendedName>
</protein>
<accession>O32022</accession>
<evidence type="ECO:0000255" key="1"/>
<evidence type="ECO:0000305" key="2"/>
<comment type="subcellular location">
    <subcellularLocation>
        <location evidence="2">Cell membrane</location>
        <topology evidence="2">Single-pass membrane protein</topology>
    </subcellularLocation>
</comment>